<protein>
    <recommendedName>
        <fullName evidence="1">Phosphoenolpyruvate synthase regulatory protein</fullName>
        <shortName evidence="1">PEP synthase regulatory protein</shortName>
        <shortName evidence="1">PSRP</shortName>
        <ecNumber evidence="1">2.7.11.33</ecNumber>
        <ecNumber evidence="1">2.7.4.28</ecNumber>
    </recommendedName>
    <alternativeName>
        <fullName evidence="1">Pyruvate, water dikinase regulatory protein</fullName>
    </alternativeName>
</protein>
<gene>
    <name evidence="1" type="primary">ppsR</name>
    <name type="ordered locus">Ecok1_15860</name>
    <name type="ORF">APECO1_779</name>
</gene>
<dbReference type="EC" id="2.7.11.33" evidence="1"/>
<dbReference type="EC" id="2.7.4.28" evidence="1"/>
<dbReference type="EMBL" id="CP000468">
    <property type="protein sequence ID" value="ABJ01080.1"/>
    <property type="molecule type" value="Genomic_DNA"/>
</dbReference>
<dbReference type="RefSeq" id="WP_000368046.1">
    <property type="nucleotide sequence ID" value="NZ_CADILS010000002.1"/>
</dbReference>
<dbReference type="SMR" id="A1ABP0"/>
<dbReference type="GeneID" id="93775866"/>
<dbReference type="KEGG" id="ecv:APECO1_779"/>
<dbReference type="HOGENOM" id="CLU_046206_1_0_6"/>
<dbReference type="Proteomes" id="UP000008216">
    <property type="component" value="Chromosome"/>
</dbReference>
<dbReference type="GO" id="GO:0043531">
    <property type="term" value="F:ADP binding"/>
    <property type="evidence" value="ECO:0007669"/>
    <property type="project" value="UniProtKB-UniRule"/>
</dbReference>
<dbReference type="GO" id="GO:0005524">
    <property type="term" value="F:ATP binding"/>
    <property type="evidence" value="ECO:0007669"/>
    <property type="project" value="InterPro"/>
</dbReference>
<dbReference type="GO" id="GO:0016776">
    <property type="term" value="F:phosphotransferase activity, phosphate group as acceptor"/>
    <property type="evidence" value="ECO:0007669"/>
    <property type="project" value="UniProtKB-UniRule"/>
</dbReference>
<dbReference type="GO" id="GO:0004674">
    <property type="term" value="F:protein serine/threonine kinase activity"/>
    <property type="evidence" value="ECO:0007669"/>
    <property type="project" value="UniProtKB-UniRule"/>
</dbReference>
<dbReference type="HAMAP" id="MF_01062">
    <property type="entry name" value="PSRP"/>
    <property type="match status" value="1"/>
</dbReference>
<dbReference type="InterPro" id="IPR005177">
    <property type="entry name" value="Kinase-pyrophosphorylase"/>
</dbReference>
<dbReference type="InterPro" id="IPR026530">
    <property type="entry name" value="PSRP"/>
</dbReference>
<dbReference type="NCBIfam" id="NF003742">
    <property type="entry name" value="PRK05339.1"/>
    <property type="match status" value="1"/>
</dbReference>
<dbReference type="PANTHER" id="PTHR31756">
    <property type="entry name" value="PYRUVATE, PHOSPHATE DIKINASE REGULATORY PROTEIN 1, CHLOROPLASTIC"/>
    <property type="match status" value="1"/>
</dbReference>
<dbReference type="PANTHER" id="PTHR31756:SF3">
    <property type="entry name" value="PYRUVATE, PHOSPHATE DIKINASE REGULATORY PROTEIN 1, CHLOROPLASTIC"/>
    <property type="match status" value="1"/>
</dbReference>
<dbReference type="Pfam" id="PF03618">
    <property type="entry name" value="Kinase-PPPase"/>
    <property type="match status" value="1"/>
</dbReference>
<sequence length="277" mass="31211">MDNAVDRHVFYISDGTAITAEVLGHAVMSQFPVTISSITLPFVENESRARAVKDQIDAIYHQTGVRPLVFYSIVLPEIRAIILQSEGFCQDIVQALVAPLQQEMKLDPTPIAHRTHGLNPNNLNKYDARIAAIDYTLAHDDGISLRNLDQAQVILLGVSRCGKTPTSLYLAMQFGIRAANYPFIADDMDNLVLPASLKPLQHKLFGLTIDPERLAAIREERRENSRYASLRQCRMEVAEVEALYRKNQIPWINSTNYSVEEIATKILDIMGLSRRMY</sequence>
<evidence type="ECO:0000255" key="1">
    <source>
        <dbReference type="HAMAP-Rule" id="MF_01062"/>
    </source>
</evidence>
<organism>
    <name type="scientific">Escherichia coli O1:K1 / APEC</name>
    <dbReference type="NCBI Taxonomy" id="405955"/>
    <lineage>
        <taxon>Bacteria</taxon>
        <taxon>Pseudomonadati</taxon>
        <taxon>Pseudomonadota</taxon>
        <taxon>Gammaproteobacteria</taxon>
        <taxon>Enterobacterales</taxon>
        <taxon>Enterobacteriaceae</taxon>
        <taxon>Escherichia</taxon>
    </lineage>
</organism>
<accession>A1ABP0</accession>
<comment type="function">
    <text evidence="1">Bifunctional serine/threonine kinase and phosphorylase involved in the regulation of the phosphoenolpyruvate synthase (PEPS) by catalyzing its phosphorylation/dephosphorylation.</text>
</comment>
<comment type="catalytic activity">
    <reaction evidence="1">
        <text>[pyruvate, water dikinase] + ADP = [pyruvate, water dikinase]-phosphate + AMP + H(+)</text>
        <dbReference type="Rhea" id="RHEA:46020"/>
        <dbReference type="Rhea" id="RHEA-COMP:11425"/>
        <dbReference type="Rhea" id="RHEA-COMP:11426"/>
        <dbReference type="ChEBI" id="CHEBI:15378"/>
        <dbReference type="ChEBI" id="CHEBI:43176"/>
        <dbReference type="ChEBI" id="CHEBI:68546"/>
        <dbReference type="ChEBI" id="CHEBI:456215"/>
        <dbReference type="ChEBI" id="CHEBI:456216"/>
        <dbReference type="EC" id="2.7.11.33"/>
    </reaction>
</comment>
<comment type="catalytic activity">
    <reaction evidence="1">
        <text>[pyruvate, water dikinase]-phosphate + phosphate + H(+) = [pyruvate, water dikinase] + diphosphate</text>
        <dbReference type="Rhea" id="RHEA:48580"/>
        <dbReference type="Rhea" id="RHEA-COMP:11425"/>
        <dbReference type="Rhea" id="RHEA-COMP:11426"/>
        <dbReference type="ChEBI" id="CHEBI:15378"/>
        <dbReference type="ChEBI" id="CHEBI:33019"/>
        <dbReference type="ChEBI" id="CHEBI:43176"/>
        <dbReference type="ChEBI" id="CHEBI:43474"/>
        <dbReference type="ChEBI" id="CHEBI:68546"/>
        <dbReference type="EC" id="2.7.4.28"/>
    </reaction>
</comment>
<comment type="similarity">
    <text evidence="1">Belongs to the pyruvate, phosphate/water dikinase regulatory protein family. PSRP subfamily.</text>
</comment>
<feature type="chain" id="PRO_0000316673" description="Phosphoenolpyruvate synthase regulatory protein">
    <location>
        <begin position="1"/>
        <end position="277"/>
    </location>
</feature>
<feature type="binding site" evidence="1">
    <location>
        <begin position="157"/>
        <end position="164"/>
    </location>
    <ligand>
        <name>ADP</name>
        <dbReference type="ChEBI" id="CHEBI:456216"/>
    </ligand>
</feature>
<reference key="1">
    <citation type="journal article" date="2007" name="J. Bacteriol.">
        <title>The genome sequence of avian pathogenic Escherichia coli strain O1:K1:H7 shares strong similarities with human extraintestinal pathogenic E. coli genomes.</title>
        <authorList>
            <person name="Johnson T.J."/>
            <person name="Kariyawasam S."/>
            <person name="Wannemuehler Y."/>
            <person name="Mangiamele P."/>
            <person name="Johnson S.J."/>
            <person name="Doetkott C."/>
            <person name="Skyberg J.A."/>
            <person name="Lynne A.M."/>
            <person name="Johnson J.R."/>
            <person name="Nolan L.K."/>
        </authorList>
    </citation>
    <scope>NUCLEOTIDE SEQUENCE [LARGE SCALE GENOMIC DNA]</scope>
</reference>
<proteinExistence type="inferred from homology"/>
<name>PSRP_ECOK1</name>
<keyword id="KW-0418">Kinase</keyword>
<keyword id="KW-0547">Nucleotide-binding</keyword>
<keyword id="KW-1185">Reference proteome</keyword>
<keyword id="KW-0723">Serine/threonine-protein kinase</keyword>
<keyword id="KW-0808">Transferase</keyword>